<gene>
    <name evidence="8" type="primary">Mthfd2l</name>
</gene>
<keyword id="KW-0025">Alternative splicing</keyword>
<keyword id="KW-0028">Amino-acid biosynthesis</keyword>
<keyword id="KW-0368">Histidine biosynthesis</keyword>
<keyword id="KW-0378">Hydrolase</keyword>
<keyword id="KW-0460">Magnesium</keyword>
<keyword id="KW-0472">Membrane</keyword>
<keyword id="KW-0486">Methionine biosynthesis</keyword>
<keyword id="KW-0496">Mitochondrion</keyword>
<keyword id="KW-0999">Mitochondrion inner membrane</keyword>
<keyword id="KW-0511">Multifunctional enzyme</keyword>
<keyword id="KW-0520">NAD</keyword>
<keyword id="KW-0554">One-carbon metabolism</keyword>
<keyword id="KW-0560">Oxidoreductase</keyword>
<keyword id="KW-0658">Purine biosynthesis</keyword>
<keyword id="KW-1185">Reference proteome</keyword>
<dbReference type="EC" id="1.5.1.15" evidence="3"/>
<dbReference type="EC" id="1.5.1.5" evidence="2 3"/>
<dbReference type="EC" id="3.5.4.9" evidence="3"/>
<dbReference type="EMBL" id="CH474060">
    <property type="protein sequence ID" value="EDL88577.1"/>
    <property type="molecule type" value="Genomic_DNA"/>
</dbReference>
<dbReference type="RefSeq" id="NP_001100681.1">
    <molecule id="D3ZUA0-1"/>
    <property type="nucleotide sequence ID" value="NM_001107211.2"/>
</dbReference>
<dbReference type="RefSeq" id="XP_063129139.1">
    <molecule id="D3ZUA0-2"/>
    <property type="nucleotide sequence ID" value="XM_063273069.1"/>
</dbReference>
<dbReference type="SMR" id="D3ZUA0"/>
<dbReference type="FunCoup" id="D3ZUA0">
    <property type="interactions" value="1677"/>
</dbReference>
<dbReference type="STRING" id="10116.ENSRNOP00000044342"/>
<dbReference type="PhosphoSitePlus" id="D3ZUA0"/>
<dbReference type="PaxDb" id="10116-ENSRNOP00000044342"/>
<dbReference type="Ensembl" id="ENSRNOT00000047708.6">
    <molecule id="D3ZUA0-1"/>
    <property type="protein sequence ID" value="ENSRNOP00000044342.4"/>
    <property type="gene ID" value="ENSRNOG00000021347.7"/>
</dbReference>
<dbReference type="GeneID" id="305248"/>
<dbReference type="KEGG" id="rno:305248"/>
<dbReference type="UCSC" id="RGD:1310879">
    <molecule id="D3ZUA0-1"/>
    <property type="organism name" value="rat"/>
</dbReference>
<dbReference type="AGR" id="RGD:1310879"/>
<dbReference type="CTD" id="441024"/>
<dbReference type="RGD" id="1310879">
    <property type="gene designation" value="Mthfd2l"/>
</dbReference>
<dbReference type="eggNOG" id="KOG0089">
    <property type="taxonomic scope" value="Eukaryota"/>
</dbReference>
<dbReference type="GeneTree" id="ENSGT00940000160901"/>
<dbReference type="HOGENOM" id="CLU_034045_0_1_1"/>
<dbReference type="InParanoid" id="D3ZUA0"/>
<dbReference type="OMA" id="YGCMKML"/>
<dbReference type="OrthoDB" id="5126881at2759"/>
<dbReference type="PhylomeDB" id="D3ZUA0"/>
<dbReference type="TreeFam" id="TF323998"/>
<dbReference type="BRENDA" id="1.5.1.5">
    <property type="organism ID" value="5301"/>
</dbReference>
<dbReference type="Reactome" id="R-RNO-196757">
    <property type="pathway name" value="Metabolism of folate and pterines"/>
</dbReference>
<dbReference type="UniPathway" id="UPA00193"/>
<dbReference type="PRO" id="PR:D3ZUA0"/>
<dbReference type="Proteomes" id="UP000002494">
    <property type="component" value="Chromosome 14"/>
</dbReference>
<dbReference type="Proteomes" id="UP000234681">
    <property type="component" value="Chromosome 14"/>
</dbReference>
<dbReference type="Bgee" id="ENSRNOG00000021347">
    <property type="expression patterns" value="Expressed in quadriceps femoris and 17 other cell types or tissues"/>
</dbReference>
<dbReference type="ExpressionAtlas" id="D3ZUA0">
    <property type="expression patterns" value="baseline and differential"/>
</dbReference>
<dbReference type="GO" id="GO:0005743">
    <property type="term" value="C:mitochondrial inner membrane"/>
    <property type="evidence" value="ECO:0000314"/>
    <property type="project" value="RGD"/>
</dbReference>
<dbReference type="GO" id="GO:0005759">
    <property type="term" value="C:mitochondrial matrix"/>
    <property type="evidence" value="ECO:0000314"/>
    <property type="project" value="RGD"/>
</dbReference>
<dbReference type="GO" id="GO:0005739">
    <property type="term" value="C:mitochondrion"/>
    <property type="evidence" value="ECO:0000318"/>
    <property type="project" value="GO_Central"/>
</dbReference>
<dbReference type="GO" id="GO:0004477">
    <property type="term" value="F:methenyltetrahydrofolate cyclohydrolase activity"/>
    <property type="evidence" value="ECO:0000314"/>
    <property type="project" value="UniProtKB"/>
</dbReference>
<dbReference type="GO" id="GO:0004487">
    <property type="term" value="F:methylenetetrahydrofolate dehydrogenase (NAD+) activity"/>
    <property type="evidence" value="ECO:0000314"/>
    <property type="project" value="UniProtKB"/>
</dbReference>
<dbReference type="GO" id="GO:0004488">
    <property type="term" value="F:methylenetetrahydrofolate dehydrogenase (NADP+) activity"/>
    <property type="evidence" value="ECO:0000314"/>
    <property type="project" value="UniProtKB"/>
</dbReference>
<dbReference type="GO" id="GO:0009256">
    <property type="term" value="P:10-formyltetrahydrofolate metabolic process"/>
    <property type="evidence" value="ECO:0000314"/>
    <property type="project" value="RGD"/>
</dbReference>
<dbReference type="GO" id="GO:0000105">
    <property type="term" value="P:L-histidine biosynthetic process"/>
    <property type="evidence" value="ECO:0007669"/>
    <property type="project" value="UniProtKB-KW"/>
</dbReference>
<dbReference type="GO" id="GO:0009086">
    <property type="term" value="P:methionine biosynthetic process"/>
    <property type="evidence" value="ECO:0007669"/>
    <property type="project" value="UniProtKB-KW"/>
</dbReference>
<dbReference type="GO" id="GO:0006164">
    <property type="term" value="P:purine nucleotide biosynthetic process"/>
    <property type="evidence" value="ECO:0007669"/>
    <property type="project" value="UniProtKB-KW"/>
</dbReference>
<dbReference type="GO" id="GO:0035999">
    <property type="term" value="P:tetrahydrofolate interconversion"/>
    <property type="evidence" value="ECO:0000314"/>
    <property type="project" value="UniProtKB"/>
</dbReference>
<dbReference type="CDD" id="cd01080">
    <property type="entry name" value="NAD_bind_m-THF_DH_Cyclohyd"/>
    <property type="match status" value="1"/>
</dbReference>
<dbReference type="FunFam" id="3.40.50.10860:FF:000001">
    <property type="entry name" value="Bifunctional protein FolD"/>
    <property type="match status" value="1"/>
</dbReference>
<dbReference type="FunFam" id="3.40.50.720:FF:000070">
    <property type="entry name" value="probable bifunctional methylenetetrahydrofolate dehydrogenase/cyclohydrolase 2"/>
    <property type="match status" value="1"/>
</dbReference>
<dbReference type="Gene3D" id="3.40.50.10860">
    <property type="entry name" value="Leucine Dehydrogenase, chain A, domain 1"/>
    <property type="match status" value="1"/>
</dbReference>
<dbReference type="Gene3D" id="3.40.50.720">
    <property type="entry name" value="NAD(P)-binding Rossmann-like Domain"/>
    <property type="match status" value="1"/>
</dbReference>
<dbReference type="HAMAP" id="MF_01576">
    <property type="entry name" value="THF_DHG_CYH"/>
    <property type="match status" value="1"/>
</dbReference>
<dbReference type="InterPro" id="IPR046346">
    <property type="entry name" value="Aminoacid_DH-like_N_sf"/>
</dbReference>
<dbReference type="InterPro" id="IPR036291">
    <property type="entry name" value="NAD(P)-bd_dom_sf"/>
</dbReference>
<dbReference type="InterPro" id="IPR000672">
    <property type="entry name" value="THF_DH/CycHdrlase"/>
</dbReference>
<dbReference type="InterPro" id="IPR020630">
    <property type="entry name" value="THF_DH/CycHdrlase_cat_dom"/>
</dbReference>
<dbReference type="InterPro" id="IPR020867">
    <property type="entry name" value="THF_DH/CycHdrlase_CS"/>
</dbReference>
<dbReference type="InterPro" id="IPR020631">
    <property type="entry name" value="THF_DH/CycHdrlase_NAD-bd_dom"/>
</dbReference>
<dbReference type="PANTHER" id="PTHR48099:SF7">
    <property type="entry name" value="BIFUNCTIONAL METHYLENETETRAHYDROFOLATE DEHYDROGENASE_CYCLOHYDROLASE 2, MITOCHONDRIAL"/>
    <property type="match status" value="1"/>
</dbReference>
<dbReference type="PANTHER" id="PTHR48099">
    <property type="entry name" value="C-1-TETRAHYDROFOLATE SYNTHASE, CYTOPLASMIC-RELATED"/>
    <property type="match status" value="1"/>
</dbReference>
<dbReference type="Pfam" id="PF00763">
    <property type="entry name" value="THF_DHG_CYH"/>
    <property type="match status" value="1"/>
</dbReference>
<dbReference type="Pfam" id="PF02882">
    <property type="entry name" value="THF_DHG_CYH_C"/>
    <property type="match status" value="1"/>
</dbReference>
<dbReference type="PRINTS" id="PR00085">
    <property type="entry name" value="THFDHDRGNASE"/>
</dbReference>
<dbReference type="SUPFAM" id="SSF53223">
    <property type="entry name" value="Aminoacid dehydrogenase-like, N-terminal domain"/>
    <property type="match status" value="1"/>
</dbReference>
<dbReference type="SUPFAM" id="SSF51735">
    <property type="entry name" value="NAD(P)-binding Rossmann-fold domains"/>
    <property type="match status" value="1"/>
</dbReference>
<dbReference type="PROSITE" id="PS00767">
    <property type="entry name" value="THF_DHG_CYH_2"/>
    <property type="match status" value="1"/>
</dbReference>
<protein>
    <recommendedName>
        <fullName evidence="6">Bifunctional methylenetetrahydrofolate dehydrogenase/cyclohydrolase 2, mitochondrial</fullName>
    </recommendedName>
    <alternativeName>
        <fullName evidence="6">NADP-dependent methylenetetrahydrofolate dehydrogenase 2-like protein</fullName>
        <shortName evidence="4">MTHFD2-like</shortName>
    </alternativeName>
    <domain>
        <recommendedName>
            <fullName evidence="6">Methylenetetrahydrofolate dehydrogenase, mitochondrial</fullName>
            <ecNumber evidence="3">1.5.1.15</ecNumber>
            <ecNumber evidence="2 3">1.5.1.5</ecNumber>
        </recommendedName>
    </domain>
    <domain>
        <recommendedName>
            <fullName evidence="7">Methenyltetrahydrofolate cyclohydrolase, mitochondrial</fullName>
            <ecNumber evidence="3">3.5.4.9</ecNumber>
        </recommendedName>
    </domain>
</protein>
<comment type="function">
    <molecule>Isoform 1</molecule>
    <text evidence="2 3">Bifunctional mitochondrial folate-interconverting enzyme that has both NAD/NADP-dependent methylenetetrahydrofolate dehydrogenase and methenyltetrahydrofolate cyclohydrolase activities.</text>
</comment>
<comment type="function">
    <molecule>Isoform 2</molecule>
    <text evidence="3">Has no NAD/NADP-dependent methylenetetrahydrofolate dehydrogenase activity.</text>
</comment>
<comment type="catalytic activity">
    <molecule>Isoform 1</molecule>
    <reaction evidence="2 3">
        <text>(6R)-5,10-methylene-5,6,7,8-tetrahydrofolate + NADP(+) = (6R)-5,10-methenyltetrahydrofolate + NADPH</text>
        <dbReference type="Rhea" id="RHEA:22812"/>
        <dbReference type="ChEBI" id="CHEBI:15636"/>
        <dbReference type="ChEBI" id="CHEBI:57455"/>
        <dbReference type="ChEBI" id="CHEBI:57783"/>
        <dbReference type="ChEBI" id="CHEBI:58349"/>
        <dbReference type="EC" id="1.5.1.5"/>
    </reaction>
</comment>
<comment type="catalytic activity">
    <molecule>Isoform 1</molecule>
    <reaction evidence="3">
        <text>(6R)-5,10-methylene-5,6,7,8-tetrahydrofolate + NAD(+) = (6R)-5,10-methenyltetrahydrofolate + NADH</text>
        <dbReference type="Rhea" id="RHEA:22892"/>
        <dbReference type="ChEBI" id="CHEBI:15636"/>
        <dbReference type="ChEBI" id="CHEBI:57455"/>
        <dbReference type="ChEBI" id="CHEBI:57540"/>
        <dbReference type="ChEBI" id="CHEBI:57945"/>
        <dbReference type="EC" id="1.5.1.15"/>
    </reaction>
</comment>
<comment type="catalytic activity">
    <molecule>Isoform 1</molecule>
    <reaction evidence="3">
        <text>(6R)-5,10-methenyltetrahydrofolate + H2O = (6R)-10-formyltetrahydrofolate + H(+)</text>
        <dbReference type="Rhea" id="RHEA:23700"/>
        <dbReference type="ChEBI" id="CHEBI:15377"/>
        <dbReference type="ChEBI" id="CHEBI:15378"/>
        <dbReference type="ChEBI" id="CHEBI:57455"/>
        <dbReference type="ChEBI" id="CHEBI:195366"/>
        <dbReference type="EC" id="3.5.4.9"/>
    </reaction>
</comment>
<comment type="cofactor">
    <cofactor evidence="3">
        <name>Mg(2+)</name>
        <dbReference type="ChEBI" id="CHEBI:18420"/>
    </cofactor>
</comment>
<comment type="biophysicochemical properties">
    <kinetics>
        <KM evidence="3">147 uM for NAD(+)</KM>
        <KM evidence="3">537 uM for NADP(+)</KM>
        <KM evidence="3">40 uM for 5,10-methylenetetrahydrofolate (in presence of NAD(+))</KM>
        <KM evidence="3">42 uM for 5,10-methylenetetrahydrofolate (in presence of NADP(+))</KM>
        <KM evidence="3">130 uM for tetrahydropteroylpentaglutamate/H4PteGlu5 (in presence of NAD(+))</KM>
        <KM evidence="3">153 uM for tetrahydropteroylpentaglutamate/H4PteGlu5 (in presence of NADP(+))</KM>
        <text evidence="3">Has similar catalytic efficiencies, at physiological concentrations, with either NAD(+) or NADP(+) as substrates for the dehydrogenation of (6R)-5,10-methylene-5,6,7,8-tetrahydrofolate.</text>
    </kinetics>
</comment>
<comment type="pathway">
    <text evidence="3">One-carbon metabolism; tetrahydrofolate interconversion.</text>
</comment>
<comment type="subcellular location">
    <subcellularLocation>
        <location evidence="2">Mitochondrion inner membrane</location>
        <topology evidence="2">Peripheral membrane protein</topology>
        <orientation evidence="2">Matrix side</orientation>
    </subcellularLocation>
</comment>
<comment type="alternative products">
    <event type="alternative splicing"/>
    <isoform>
        <id>D3ZUA0-1</id>
        <name>1</name>
        <sequence type="displayed"/>
    </isoform>
    <isoform>
        <id>D3ZUA0-2</id>
        <name>2</name>
        <sequence type="described" ref="VSP_061393"/>
    </isoform>
</comment>
<comment type="tissue specificity">
    <text evidence="2">Widely expressed.</text>
</comment>
<comment type="similarity">
    <text evidence="5">Belongs to the tetrahydrofolate dehydrogenase/cyclohydrolase family.</text>
</comment>
<name>MTD2L_RAT</name>
<organism>
    <name type="scientific">Rattus norvegicus</name>
    <name type="common">Rat</name>
    <dbReference type="NCBI Taxonomy" id="10116"/>
    <lineage>
        <taxon>Eukaryota</taxon>
        <taxon>Metazoa</taxon>
        <taxon>Chordata</taxon>
        <taxon>Craniata</taxon>
        <taxon>Vertebrata</taxon>
        <taxon>Euteleostomi</taxon>
        <taxon>Mammalia</taxon>
        <taxon>Eutheria</taxon>
        <taxon>Euarchontoglires</taxon>
        <taxon>Glires</taxon>
        <taxon>Rodentia</taxon>
        <taxon>Myomorpha</taxon>
        <taxon>Muroidea</taxon>
        <taxon>Muridae</taxon>
        <taxon>Murinae</taxon>
        <taxon>Rattus</taxon>
    </lineage>
</organism>
<sequence length="338" mass="36426">MATRARGLSLLRGRLGRGPARAPGVAERAWRGFGSSSRRHEAVIISGTEMAKQIRRELQQGVESWLALGNRRPHLSIILVGDNPASHTYVRNKIRAASAVGICSELIVKPKNVSQEELLDITDQLNMDPRVSGILVQLPLPDHVDERTICNGIAPEKDVDGFHIINIGRLCLDQHSLIPATASAVWEIIKRAGIETFGKNVVVAGRSKNVGMPIAMLLHTDGEHERPGGDATVTIAHRHTPREQLKAHTQLAEIIIVAAGIPGLITADMVREGATVIDVGINYVQDPVTGKTKLVGDVDFEAVKKKASFITPVPGGVGPMTVAMLLKNTLLAAKNITY</sequence>
<proteinExistence type="evidence at protein level"/>
<evidence type="ECO:0000250" key="1">
    <source>
        <dbReference type="UniProtKB" id="P13995"/>
    </source>
</evidence>
<evidence type="ECO:0000269" key="2">
    <source>
    </source>
</evidence>
<evidence type="ECO:0000269" key="3">
    <source>
    </source>
</evidence>
<evidence type="ECO:0000303" key="4">
    <source>
    </source>
</evidence>
<evidence type="ECO:0000305" key="5"/>
<evidence type="ECO:0000305" key="6">
    <source>
    </source>
</evidence>
<evidence type="ECO:0000305" key="7">
    <source>
    </source>
</evidence>
<evidence type="ECO:0000312" key="8">
    <source>
        <dbReference type="RGD" id="1310879"/>
    </source>
</evidence>
<reference key="1">
    <citation type="submission" date="2005-09" db="EMBL/GenBank/DDBJ databases">
        <authorList>
            <person name="Mural R.J."/>
            <person name="Adams M.D."/>
            <person name="Myers E.W."/>
            <person name="Smith H.O."/>
            <person name="Venter J.C."/>
        </authorList>
    </citation>
    <scope>NUCLEOTIDE SEQUENCE [LARGE SCALE GENOMIC DNA]</scope>
</reference>
<reference key="2">
    <citation type="journal article" date="2011" name="J. Biol. Chem.">
        <title>Mammalian MTHFD2L encodes a mitochondrial methylenetetrahydrofolate dehydrogenase isozyme expressed in adult tissues.</title>
        <authorList>
            <person name="Bolusani S."/>
            <person name="Young B.A."/>
            <person name="Cole N.A."/>
            <person name="Tibbetts A.S."/>
            <person name="Momb J."/>
            <person name="Bryant J.D."/>
            <person name="Solmonson A."/>
            <person name="Appling D.R."/>
        </authorList>
    </citation>
    <scope>FUNCTION</scope>
    <scope>CATALYTIC ACTIVITY</scope>
    <scope>ALTERNATIVE SPLICING (ISOFORMS 1 AND 2)</scope>
    <scope>SUBCELLULAR LOCATION</scope>
    <scope>TISSUE SPECIFICITY</scope>
</reference>
<reference key="3">
    <citation type="journal article" date="2014" name="J. Biol. Chem.">
        <title>Mitochondrial MTHFD2L is a dual redox cofactor-specific methylenetetrahydrofolate dehydrogenase/methenyltetrahydrofolate cyclohydrolase expressed in both adult and embryonic tissues.</title>
        <authorList>
            <person name="Shin M."/>
            <person name="Bryant J.D."/>
            <person name="Momb J."/>
            <person name="Appling D.R."/>
        </authorList>
    </citation>
    <scope>FUNCTION (ISOFORMS 1 AND 2)</scope>
    <scope>CATALYTIC ACTIVITY</scope>
    <scope>PATHWAY</scope>
    <scope>COFACTOR</scope>
    <scope>BIOPHYSICOCHEMICAL PROPERTIES</scope>
</reference>
<accession>D3ZUA0</accession>
<feature type="chain" id="PRO_0000413329" description="Bifunctional methylenetetrahydrofolate dehydrogenase/cyclohydrolase 2, mitochondrial">
    <location>
        <begin position="1"/>
        <end position="338"/>
    </location>
</feature>
<feature type="binding site" evidence="1">
    <location>
        <begin position="89"/>
        <end position="93"/>
    </location>
    <ligand>
        <name>substrate</name>
    </ligand>
</feature>
<feature type="binding site" evidence="1">
    <location>
        <begin position="136"/>
        <end position="138"/>
    </location>
    <ligand>
        <name>substrate</name>
    </ligand>
</feature>
<feature type="binding site" evidence="1">
    <location>
        <begin position="205"/>
        <end position="207"/>
    </location>
    <ligand>
        <name>NAD(+)</name>
        <dbReference type="ChEBI" id="CHEBI:57540"/>
    </ligand>
</feature>
<feature type="binding site" evidence="1">
    <location>
        <position position="238"/>
    </location>
    <ligand>
        <name>NAD(+)</name>
        <dbReference type="ChEBI" id="CHEBI:57540"/>
    </ligand>
</feature>
<feature type="binding site" evidence="1">
    <location>
        <begin position="314"/>
        <end position="318"/>
    </location>
    <ligand>
        <name>substrate</name>
    </ligand>
</feature>
<feature type="splice variant" id="VSP_061393" description="In isoform 2." evidence="6 7">
    <location>
        <begin position="260"/>
        <end position="301"/>
    </location>
</feature>